<protein>
    <recommendedName>
        <fullName>Uridylate kinase</fullName>
        <shortName>UK</shortName>
        <ecNumber>2.7.4.22</ecNumber>
    </recommendedName>
    <alternativeName>
        <fullName>Uridine monophosphate kinase</fullName>
        <shortName>UMP kinase</shortName>
        <shortName>UMPK</shortName>
    </alternativeName>
</protein>
<evidence type="ECO:0000250" key="1"/>
<evidence type="ECO:0000255" key="2"/>
<evidence type="ECO:0000269" key="3">
    <source>
    </source>
</evidence>
<evidence type="ECO:0000269" key="4">
    <source>
    </source>
</evidence>
<evidence type="ECO:0000305" key="5"/>
<sequence length="247" mass="26703">MKMANPKYKRILIKLSGEALAGERGVGIDIQTVQTIAKEIQEVHSLGIEIALVIGGGNLWRGEPAAEAGMDRVQADYTGMLGTVMNALVMADSLQQVGVDTRVQTAIAMQQVAEPYVRGRALRHLEKGRIVIFGAGIGSPYFSTDTTAALRAAEIEADAILMAKNGVDGVYNADPKKDKTAVKFEELTHRDVINKGLRIMDSTASTLSMDNDIDLVVFNMNQPGNIKRVVFGENIGTTVSNNIEEKE</sequence>
<name>PYRH_STRPN</name>
<gene>
    <name type="primary">pyrH</name>
    <name type="ordered locus">SP_0944</name>
</gene>
<keyword id="KW-0021">Allosteric enzyme</keyword>
<keyword id="KW-0067">ATP-binding</keyword>
<keyword id="KW-0963">Cytoplasm</keyword>
<keyword id="KW-0903">Direct protein sequencing</keyword>
<keyword id="KW-0418">Kinase</keyword>
<keyword id="KW-0547">Nucleotide-binding</keyword>
<keyword id="KW-0665">Pyrimidine biosynthesis</keyword>
<keyword id="KW-1185">Reference proteome</keyword>
<keyword id="KW-0808">Transferase</keyword>
<organism>
    <name type="scientific">Streptococcus pneumoniae serotype 4 (strain ATCC BAA-334 / TIGR4)</name>
    <dbReference type="NCBI Taxonomy" id="170187"/>
    <lineage>
        <taxon>Bacteria</taxon>
        <taxon>Bacillati</taxon>
        <taxon>Bacillota</taxon>
        <taxon>Bacilli</taxon>
        <taxon>Lactobacillales</taxon>
        <taxon>Streptococcaceae</taxon>
        <taxon>Streptococcus</taxon>
    </lineage>
</organism>
<comment type="function">
    <text evidence="3">Catalyzes the reversible phosphorylation of UMP to UDP, with ATP as the most efficient phosphate donor.</text>
</comment>
<comment type="catalytic activity">
    <reaction>
        <text>UMP + ATP = UDP + ADP</text>
        <dbReference type="Rhea" id="RHEA:24400"/>
        <dbReference type="ChEBI" id="CHEBI:30616"/>
        <dbReference type="ChEBI" id="CHEBI:57865"/>
        <dbReference type="ChEBI" id="CHEBI:58223"/>
        <dbReference type="ChEBI" id="CHEBI:456216"/>
        <dbReference type="EC" id="2.7.4.22"/>
    </reaction>
</comment>
<comment type="activity regulation">
    <text evidence="3 4">Allosterically activated by GTP. Inhibited by UTP, 5-bromo-UTP and 5-iodo-UTP.</text>
</comment>
<comment type="biophysicochemical properties">
    <kinetics>
        <KM evidence="3 4">22 uM for UMP (in the absence of GTP)</KM>
        <KM evidence="3 4">100 uM for UMP (in the presence of GTP)</KM>
        <Vmax evidence="3 4">274.0 umol/min/mg enzyme (at pH 7.5 and in the presence of manganese)</Vmax>
        <Vmax evidence="3 4">399.0 umol/min/mg enzyme (at pH 7.5 and in the presence of magnesium)</Vmax>
        <Vmax evidence="3 4">182.0 umol/min/mg enzyme (at pH 6.5 and in the presence of magnesium)</Vmax>
        <text>Positive cooperativity is observed with ATP as variable substrate, but it is strongly reduced in the presence of GTP. GTP enhances the affinity for ATP whereas UTP decreases it.</text>
    </kinetics>
    <phDependence>
        <text evidence="3">Optimum pH is below 6.5 at low ATP concentrations and is 7.4-7.8 at high ATP concentrations.</text>
    </phDependence>
</comment>
<comment type="pathway">
    <text>Pyrimidine metabolism; CTP biosynthesis via de novo pathway; UDP from UMP (UMPK route): step 1/1.</text>
</comment>
<comment type="subunit">
    <text evidence="3 4">Homohexamer.</text>
</comment>
<comment type="subcellular location">
    <subcellularLocation>
        <location evidence="1">Cytoplasm</location>
    </subcellularLocation>
</comment>
<comment type="similarity">
    <text evidence="5">Belongs to the UMP kinase family.</text>
</comment>
<reference key="1">
    <citation type="journal article" date="2001" name="Science">
        <title>Complete genome sequence of a virulent isolate of Streptococcus pneumoniae.</title>
        <authorList>
            <person name="Tettelin H."/>
            <person name="Nelson K.E."/>
            <person name="Paulsen I.T."/>
            <person name="Eisen J.A."/>
            <person name="Read T.D."/>
            <person name="Peterson S.N."/>
            <person name="Heidelberg J.F."/>
            <person name="DeBoy R.T."/>
            <person name="Haft D.H."/>
            <person name="Dodson R.J."/>
            <person name="Durkin A.S."/>
            <person name="Gwinn M.L."/>
            <person name="Kolonay J.F."/>
            <person name="Nelson W.C."/>
            <person name="Peterson J.D."/>
            <person name="Umayam L.A."/>
            <person name="White O."/>
            <person name="Salzberg S.L."/>
            <person name="Lewis M.R."/>
            <person name="Radune D."/>
            <person name="Holtzapple E.K."/>
            <person name="Khouri H.M."/>
            <person name="Wolf A.M."/>
            <person name="Utterback T.R."/>
            <person name="Hansen C.L."/>
            <person name="McDonald L.A."/>
            <person name="Feldblyum T.V."/>
            <person name="Angiuoli S.V."/>
            <person name="Dickinson T."/>
            <person name="Hickey E.K."/>
            <person name="Holt I.E."/>
            <person name="Loftus B.J."/>
            <person name="Yang F."/>
            <person name="Smith H.O."/>
            <person name="Venter J.C."/>
            <person name="Dougherty B.A."/>
            <person name="Morrison D.A."/>
            <person name="Hollingshead S.K."/>
            <person name="Fraser C.M."/>
        </authorList>
    </citation>
    <scope>NUCLEOTIDE SEQUENCE [LARGE SCALE GENOMIC DNA]</scope>
    <source>
        <strain>ATCC BAA-334 / TIGR4</strain>
    </source>
</reference>
<reference key="2">
    <citation type="journal article" date="2004" name="Biochem. J.">
        <title>UMP kinase from Streptococcus pneumoniae: evidence for co-operative ATP binding and allosteric regulation.</title>
        <authorList>
            <person name="Fassy F."/>
            <person name="Krebs O."/>
            <person name="Lowinski M."/>
            <person name="Ferrari P."/>
            <person name="Winter J."/>
            <person name="Collard-Dutilleul V."/>
            <person name="Salahbey Hocini K."/>
        </authorList>
    </citation>
    <scope>PROTEIN SEQUENCE OF N-TERMINUS</scope>
    <scope>FUNCTION</scope>
    <scope>SUBSTRATE SPECIFICITY</scope>
    <scope>CHARACTERIZATION</scope>
    <scope>ACTIVITY REGULATION</scope>
    <scope>BIOPHYSICOCHEMICAL PROPERTIES</scope>
    <scope>SUBUNIT</scope>
    <source>
        <strain>R6 / R800</strain>
    </source>
</reference>
<reference key="3">
    <citation type="journal article" date="2007" name="J. Biol. Chem.">
        <title>Regulatory mechanisms differ in UMP kinases from Gram-negative and Gram-positive bacteria.</title>
        <authorList>
            <person name="Evrin C."/>
            <person name="Straut M."/>
            <person name="Slavova-Azmanova N."/>
            <person name="Bucurenci N."/>
            <person name="Onu A."/>
            <person name="Assairi L."/>
            <person name="Ionescu M."/>
            <person name="Palibroda N."/>
            <person name="Barzu O."/>
            <person name="Gilles A.-M."/>
        </authorList>
    </citation>
    <scope>ACTIVITY REGULATION</scope>
    <scope>KINETIC PARAMETERS</scope>
    <scope>SUBUNIT</scope>
</reference>
<feature type="initiator methionine" description="Removed">
    <location>
        <position position="1"/>
    </location>
</feature>
<feature type="chain" id="PRO_0000143892" description="Uridylate kinase">
    <location>
        <begin position="2"/>
        <end position="247"/>
    </location>
</feature>
<feature type="region of interest" description="Involved in allosteric activation by GTP" evidence="2">
    <location>
        <begin position="22"/>
        <end position="27"/>
    </location>
</feature>
<feature type="binding site" evidence="1">
    <location>
        <begin position="14"/>
        <end position="17"/>
    </location>
    <ligand>
        <name>ATP</name>
        <dbReference type="ChEBI" id="CHEBI:30616"/>
    </ligand>
</feature>
<feature type="binding site" evidence="1">
    <location>
        <position position="56"/>
    </location>
    <ligand>
        <name>UMP</name>
        <dbReference type="ChEBI" id="CHEBI:57865"/>
    </ligand>
</feature>
<feature type="binding site" evidence="1">
    <location>
        <position position="57"/>
    </location>
    <ligand>
        <name>ATP</name>
        <dbReference type="ChEBI" id="CHEBI:30616"/>
    </ligand>
</feature>
<feature type="binding site" evidence="1">
    <location>
        <position position="61"/>
    </location>
    <ligand>
        <name>ATP</name>
        <dbReference type="ChEBI" id="CHEBI:30616"/>
    </ligand>
</feature>
<feature type="binding site" evidence="1">
    <location>
        <position position="76"/>
    </location>
    <ligand>
        <name>UMP</name>
        <dbReference type="ChEBI" id="CHEBI:57865"/>
    </ligand>
</feature>
<feature type="binding site" evidence="1">
    <location>
        <begin position="137"/>
        <end position="144"/>
    </location>
    <ligand>
        <name>UMP</name>
        <dbReference type="ChEBI" id="CHEBI:57865"/>
    </ligand>
</feature>
<feature type="binding site" evidence="1">
    <location>
        <position position="165"/>
    </location>
    <ligand>
        <name>ATP</name>
        <dbReference type="ChEBI" id="CHEBI:30616"/>
    </ligand>
</feature>
<feature type="binding site" evidence="1">
    <location>
        <position position="171"/>
    </location>
    <ligand>
        <name>ATP</name>
        <dbReference type="ChEBI" id="CHEBI:30616"/>
    </ligand>
</feature>
<feature type="binding site" evidence="1">
    <location>
        <position position="174"/>
    </location>
    <ligand>
        <name>ATP</name>
        <dbReference type="ChEBI" id="CHEBI:30616"/>
    </ligand>
</feature>
<accession>Q97R83</accession>
<proteinExistence type="evidence at protein level"/>
<dbReference type="EC" id="2.7.4.22"/>
<dbReference type="EMBL" id="AE005672">
    <property type="protein sequence ID" value="AAK75067.1"/>
    <property type="molecule type" value="Genomic_DNA"/>
</dbReference>
<dbReference type="PIR" id="B95109">
    <property type="entry name" value="B95109"/>
</dbReference>
<dbReference type="SMR" id="Q97R83"/>
<dbReference type="PaxDb" id="170187-SP_0944"/>
<dbReference type="EnsemblBacteria" id="AAK75067">
    <property type="protein sequence ID" value="AAK75067"/>
    <property type="gene ID" value="SP_0944"/>
</dbReference>
<dbReference type="KEGG" id="spn:SP_0944"/>
<dbReference type="eggNOG" id="COG0528">
    <property type="taxonomic scope" value="Bacteria"/>
</dbReference>
<dbReference type="PhylomeDB" id="Q97R83"/>
<dbReference type="BRENDA" id="2.7.4.22">
    <property type="organism ID" value="1960"/>
</dbReference>
<dbReference type="SABIO-RK" id="Q97R83"/>
<dbReference type="UniPathway" id="UPA00159">
    <property type="reaction ID" value="UER00275"/>
</dbReference>
<dbReference type="Proteomes" id="UP000000585">
    <property type="component" value="Chromosome"/>
</dbReference>
<dbReference type="GO" id="GO:0005737">
    <property type="term" value="C:cytoplasm"/>
    <property type="evidence" value="ECO:0007669"/>
    <property type="project" value="UniProtKB-SubCell"/>
</dbReference>
<dbReference type="GO" id="GO:0005524">
    <property type="term" value="F:ATP binding"/>
    <property type="evidence" value="ECO:0007669"/>
    <property type="project" value="UniProtKB-KW"/>
</dbReference>
<dbReference type="GO" id="GO:0033862">
    <property type="term" value="F:UMP kinase activity"/>
    <property type="evidence" value="ECO:0007669"/>
    <property type="project" value="UniProtKB-EC"/>
</dbReference>
<dbReference type="GO" id="GO:0044210">
    <property type="term" value="P:'de novo' CTP biosynthetic process"/>
    <property type="evidence" value="ECO:0007669"/>
    <property type="project" value="UniProtKB-UniRule"/>
</dbReference>
<dbReference type="GO" id="GO:0006225">
    <property type="term" value="P:UDP biosynthetic process"/>
    <property type="evidence" value="ECO:0007669"/>
    <property type="project" value="TreeGrafter"/>
</dbReference>
<dbReference type="CDD" id="cd04254">
    <property type="entry name" value="AAK_UMPK-PyrH-Ec"/>
    <property type="match status" value="1"/>
</dbReference>
<dbReference type="FunFam" id="3.40.1160.10:FF:000019">
    <property type="entry name" value="Uridylate kinase"/>
    <property type="match status" value="1"/>
</dbReference>
<dbReference type="Gene3D" id="3.40.1160.10">
    <property type="entry name" value="Acetylglutamate kinase-like"/>
    <property type="match status" value="1"/>
</dbReference>
<dbReference type="HAMAP" id="MF_01220_B">
    <property type="entry name" value="PyrH_B"/>
    <property type="match status" value="1"/>
</dbReference>
<dbReference type="InterPro" id="IPR036393">
    <property type="entry name" value="AceGlu_kinase-like_sf"/>
</dbReference>
<dbReference type="InterPro" id="IPR001048">
    <property type="entry name" value="Asp/Glu/Uridylate_kinase"/>
</dbReference>
<dbReference type="InterPro" id="IPR011817">
    <property type="entry name" value="Uridylate_kinase"/>
</dbReference>
<dbReference type="InterPro" id="IPR015963">
    <property type="entry name" value="Uridylate_kinase_bac"/>
</dbReference>
<dbReference type="NCBIfam" id="TIGR02075">
    <property type="entry name" value="pyrH_bact"/>
    <property type="match status" value="1"/>
</dbReference>
<dbReference type="PANTHER" id="PTHR42833">
    <property type="entry name" value="URIDYLATE KINASE"/>
    <property type="match status" value="1"/>
</dbReference>
<dbReference type="PANTHER" id="PTHR42833:SF4">
    <property type="entry name" value="URIDYLATE KINASE PUMPKIN, CHLOROPLASTIC"/>
    <property type="match status" value="1"/>
</dbReference>
<dbReference type="Pfam" id="PF00696">
    <property type="entry name" value="AA_kinase"/>
    <property type="match status" value="1"/>
</dbReference>
<dbReference type="PIRSF" id="PIRSF005650">
    <property type="entry name" value="Uridylate_kin"/>
    <property type="match status" value="1"/>
</dbReference>
<dbReference type="SUPFAM" id="SSF53633">
    <property type="entry name" value="Carbamate kinase-like"/>
    <property type="match status" value="1"/>
</dbReference>